<comment type="function">
    <text evidence="3 4">Catalyzes the isomerization of L-ribulose 5-phosphate to D-xylulose 5-phosphate. Is involved in the anaerobic L-ascorbate utilization.</text>
</comment>
<comment type="catalytic activity">
    <reaction evidence="3 4">
        <text>L-ribulose 5-phosphate = D-xylulose 5-phosphate</text>
        <dbReference type="Rhea" id="RHEA:22368"/>
        <dbReference type="ChEBI" id="CHEBI:57737"/>
        <dbReference type="ChEBI" id="CHEBI:58226"/>
        <dbReference type="EC" id="5.1.3.4"/>
    </reaction>
</comment>
<comment type="cofactor">
    <cofactor evidence="1 3">
        <name>Zn(2+)</name>
        <dbReference type="ChEBI" id="CHEBI:29105"/>
    </cofactor>
    <text evidence="1 3">Binds 1 zinc ion per subunit.</text>
</comment>
<comment type="biophysicochemical properties">
    <kinetics>
        <KM evidence="4">657 uM for L-ribulose 5-phosphate (LRu5P)</KM>
        <text evidence="4">kcat is 25 sec(-1) with L-ribulose 5-phosphate (LRu5P) as substrate.</text>
    </kinetics>
</comment>
<comment type="pathway">
    <text evidence="3 4">Cofactor degradation; L-ascorbate degradation; D-xylulose 5-phosphate from L-ascorbate: step 4/4.</text>
</comment>
<comment type="induction">
    <text evidence="3 5 6">Induced by L-ascorbate. Repressed by UlaR.</text>
</comment>
<comment type="similarity">
    <text evidence="3">Belongs to the aldolase class II family. AraD/FucA subfamily.</text>
</comment>
<protein>
    <recommendedName>
        <fullName evidence="3 7">L-ribulose-5-phosphate 4-epimerase UlaF</fullName>
        <ecNumber evidence="3 4">5.1.3.4</ecNumber>
    </recommendedName>
    <alternativeName>
        <fullName evidence="3 7">L-ascorbate utilization protein F</fullName>
    </alternativeName>
    <alternativeName>
        <fullName evidence="3">Phosphoribulose isomerase</fullName>
    </alternativeName>
</protein>
<feature type="chain" id="PRO_0000162921" description="L-ribulose-5-phosphate 4-epimerase UlaF">
    <location>
        <begin position="1"/>
        <end position="228"/>
    </location>
</feature>
<feature type="active site" description="Proton donor/acceptor" evidence="1 3">
    <location>
        <position position="118"/>
    </location>
</feature>
<feature type="active site" description="Proton donor/acceptor" evidence="1 3">
    <location>
        <position position="225"/>
    </location>
</feature>
<feature type="binding site" evidence="2 3">
    <location>
        <begin position="26"/>
        <end position="27"/>
    </location>
    <ligand>
        <name>substrate</name>
    </ligand>
</feature>
<feature type="binding site" evidence="2 3">
    <location>
        <begin position="43"/>
        <end position="44"/>
    </location>
    <ligand>
        <name>substrate</name>
    </ligand>
</feature>
<feature type="binding site" evidence="2 3">
    <location>
        <begin position="72"/>
        <end position="73"/>
    </location>
    <ligand>
        <name>substrate</name>
    </ligand>
</feature>
<feature type="binding site" evidence="1 3">
    <location>
        <position position="74"/>
    </location>
    <ligand>
        <name>Zn(2+)</name>
        <dbReference type="ChEBI" id="CHEBI:29105"/>
    </ligand>
</feature>
<feature type="binding site" evidence="1 3">
    <location>
        <position position="93"/>
    </location>
    <ligand>
        <name>Zn(2+)</name>
        <dbReference type="ChEBI" id="CHEBI:29105"/>
    </ligand>
</feature>
<feature type="binding site" evidence="1 3">
    <location>
        <position position="95"/>
    </location>
    <ligand>
        <name>Zn(2+)</name>
        <dbReference type="ChEBI" id="CHEBI:29105"/>
    </ligand>
</feature>
<feature type="binding site" evidence="1 3">
    <location>
        <position position="167"/>
    </location>
    <ligand>
        <name>Zn(2+)</name>
        <dbReference type="ChEBI" id="CHEBI:29105"/>
    </ligand>
</feature>
<sequence>MQKLKQQVFEANMELPRYGLVTFTWGNVSAIDRERGLVVIKPSGVAYETMKAADMVVVDMSGKVVEGEYRPSSDTATHLELYRRYPSLGGIVHTHSTHATAWAQAGLAIPALGTTHADYFFGDIPCTRGLSEEEVQGEYELNTGKVIIETLGNAEPLHTPGIVVYQHGPFAWGKDAHDAVHNAVVMEEVAKMAWIARGINPQLNHIDSFLMNKHFMRKHGPNAYYGQK</sequence>
<gene>
    <name evidence="3 7" type="primary">ulaF</name>
    <name type="synonym">sgaE</name>
    <name type="synonym">yjfX</name>
    <name type="ordered locus">b4198</name>
    <name type="ordered locus">JW4156</name>
</gene>
<organism>
    <name type="scientific">Escherichia coli (strain K12)</name>
    <dbReference type="NCBI Taxonomy" id="83333"/>
    <lineage>
        <taxon>Bacteria</taxon>
        <taxon>Pseudomonadati</taxon>
        <taxon>Pseudomonadota</taxon>
        <taxon>Gammaproteobacteria</taxon>
        <taxon>Enterobacterales</taxon>
        <taxon>Enterobacteriaceae</taxon>
        <taxon>Escherichia</taxon>
    </lineage>
</organism>
<reference key="1">
    <citation type="journal article" date="1995" name="Nucleic Acids Res.">
        <title>Analysis of the Escherichia coli genome VI: DNA sequence of the region from 92.8 through 100 minutes.</title>
        <authorList>
            <person name="Burland V.D."/>
            <person name="Plunkett G. III"/>
            <person name="Sofia H.J."/>
            <person name="Daniels D.L."/>
            <person name="Blattner F.R."/>
        </authorList>
    </citation>
    <scope>NUCLEOTIDE SEQUENCE [LARGE SCALE GENOMIC DNA]</scope>
    <source>
        <strain>K12 / MG1655 / ATCC 47076</strain>
    </source>
</reference>
<reference key="2">
    <citation type="journal article" date="1997" name="Science">
        <title>The complete genome sequence of Escherichia coli K-12.</title>
        <authorList>
            <person name="Blattner F.R."/>
            <person name="Plunkett G. III"/>
            <person name="Bloch C.A."/>
            <person name="Perna N.T."/>
            <person name="Burland V."/>
            <person name="Riley M."/>
            <person name="Collado-Vides J."/>
            <person name="Glasner J.D."/>
            <person name="Rode C.K."/>
            <person name="Mayhew G.F."/>
            <person name="Gregor J."/>
            <person name="Davis N.W."/>
            <person name="Kirkpatrick H.A."/>
            <person name="Goeden M.A."/>
            <person name="Rose D.J."/>
            <person name="Mau B."/>
            <person name="Shao Y."/>
        </authorList>
    </citation>
    <scope>NUCLEOTIDE SEQUENCE [LARGE SCALE GENOMIC DNA]</scope>
    <source>
        <strain>K12 / MG1655 / ATCC 47076</strain>
    </source>
</reference>
<reference key="3">
    <citation type="journal article" date="2006" name="Mol. Syst. Biol.">
        <title>Highly accurate genome sequences of Escherichia coli K-12 strains MG1655 and W3110.</title>
        <authorList>
            <person name="Hayashi K."/>
            <person name="Morooka N."/>
            <person name="Yamamoto Y."/>
            <person name="Fujita K."/>
            <person name="Isono K."/>
            <person name="Choi S."/>
            <person name="Ohtsubo E."/>
            <person name="Baba T."/>
            <person name="Wanner B.L."/>
            <person name="Mori H."/>
            <person name="Horiuchi T."/>
        </authorList>
    </citation>
    <scope>NUCLEOTIDE SEQUENCE [LARGE SCALE GENOMIC DNA]</scope>
    <source>
        <strain>K12 / W3110 / ATCC 27325 / DSM 5911</strain>
    </source>
</reference>
<reference key="4">
    <citation type="journal article" date="1996" name="Genome Sci. Technol.">
        <title>Novel phosphotransferases system genes revealed by bacterial genome analysis: operons encoding homologues of sugar-specific permease domains of the phosphotransferase system and pentose catabolic enzymes.</title>
        <authorList>
            <person name="Reizer J."/>
            <person name="Charbit A."/>
            <person name="Reizer A."/>
            <person name="Saier M.H. Jr."/>
        </authorList>
    </citation>
    <scope>DISCUSSION OF SEQUENCE</scope>
</reference>
<reference key="5">
    <citation type="journal article" date="2002" name="J. Bacteriol.">
        <title>Utilization of L-ascorbate by Escherichia coli K-12: assignments of functions to products of the yjf-sga and yia-sgb operons.</title>
        <authorList>
            <person name="Yew W.S."/>
            <person name="Gerlt J.A."/>
        </authorList>
    </citation>
    <scope>FUNCTION</scope>
    <scope>CATALYTIC ACTIVITY</scope>
    <scope>BIOPHYSICOCHEMICAL PROPERTIES</scope>
    <scope>PATHWAY</scope>
    <source>
        <strain>K12 / MG1655 / ATCC 47076</strain>
    </source>
</reference>
<reference key="6">
    <citation type="journal article" date="2002" name="J. Bacteriol.">
        <title>The gene yjfQ encodes the repressor of the yjfR-X regulon (ula), which is involved in L-ascorbate metabolism in Escherichia coli.</title>
        <authorList>
            <person name="Campos E."/>
            <person name="Aguilar J."/>
            <person name="Baldoma L."/>
            <person name="Badia J."/>
        </authorList>
    </citation>
    <scope>INDUCTION</scope>
</reference>
<reference key="7">
    <citation type="journal article" date="2004" name="J. Bacteriol.">
        <title>Regulation of expression of the divergent ulaG and ulaABCDEF operons involved in L-ascorbate dissimilation in Escherichia coli.</title>
        <authorList>
            <person name="Campos E."/>
            <person name="Baldoma L."/>
            <person name="Aguilar J."/>
            <person name="Badia J."/>
        </authorList>
    </citation>
    <scope>INDUCTION</scope>
</reference>
<evidence type="ECO:0000250" key="1">
    <source>
        <dbReference type="UniProtKB" id="P08203"/>
    </source>
</evidence>
<evidence type="ECO:0000250" key="2">
    <source>
        <dbReference type="UniProtKB" id="P0AB87"/>
    </source>
</evidence>
<evidence type="ECO:0000255" key="3">
    <source>
        <dbReference type="HAMAP-Rule" id="MF_01952"/>
    </source>
</evidence>
<evidence type="ECO:0000269" key="4">
    <source>
    </source>
</evidence>
<evidence type="ECO:0000269" key="5">
    <source>
    </source>
</evidence>
<evidence type="ECO:0000269" key="6">
    <source>
    </source>
</evidence>
<evidence type="ECO:0000303" key="7">
    <source>
    </source>
</evidence>
<name>ULAF_ECOLI</name>
<dbReference type="EC" id="5.1.3.4" evidence="3 4"/>
<dbReference type="EMBL" id="U14003">
    <property type="protein sequence ID" value="AAA97094.1"/>
    <property type="molecule type" value="Genomic_DNA"/>
</dbReference>
<dbReference type="EMBL" id="U00096">
    <property type="protein sequence ID" value="AAC77155.1"/>
    <property type="molecule type" value="Genomic_DNA"/>
</dbReference>
<dbReference type="EMBL" id="AP009048">
    <property type="protein sequence ID" value="BAE78199.1"/>
    <property type="molecule type" value="Genomic_DNA"/>
</dbReference>
<dbReference type="PIR" id="S56423">
    <property type="entry name" value="S56423"/>
</dbReference>
<dbReference type="RefSeq" id="NP_418619.1">
    <property type="nucleotide sequence ID" value="NC_000913.3"/>
</dbReference>
<dbReference type="RefSeq" id="WP_001170847.1">
    <property type="nucleotide sequence ID" value="NZ_LN832404.1"/>
</dbReference>
<dbReference type="SMR" id="P39306"/>
<dbReference type="BioGRID" id="4262716">
    <property type="interactions" value="19"/>
</dbReference>
<dbReference type="DIP" id="DIP-10868N"/>
<dbReference type="FunCoup" id="P39306">
    <property type="interactions" value="523"/>
</dbReference>
<dbReference type="IntAct" id="P39306">
    <property type="interactions" value="12"/>
</dbReference>
<dbReference type="STRING" id="511145.b4198"/>
<dbReference type="PaxDb" id="511145-b4198"/>
<dbReference type="EnsemblBacteria" id="AAC77155">
    <property type="protein sequence ID" value="AAC77155"/>
    <property type="gene ID" value="b4198"/>
</dbReference>
<dbReference type="GeneID" id="948711"/>
<dbReference type="KEGG" id="ecj:JW4156"/>
<dbReference type="KEGG" id="eco:b4198"/>
<dbReference type="KEGG" id="ecoc:C3026_22675"/>
<dbReference type="PATRIC" id="fig|1411691.4.peg.2503"/>
<dbReference type="EchoBASE" id="EB2391"/>
<dbReference type="eggNOG" id="COG0235">
    <property type="taxonomic scope" value="Bacteria"/>
</dbReference>
<dbReference type="HOGENOM" id="CLU_006033_5_0_6"/>
<dbReference type="InParanoid" id="P39306"/>
<dbReference type="OMA" id="WLMNKHF"/>
<dbReference type="OrthoDB" id="9786287at2"/>
<dbReference type="PhylomeDB" id="P39306"/>
<dbReference type="BioCyc" id="EcoCyc:G7860-MONOMER"/>
<dbReference type="BioCyc" id="MetaCyc:G7860-MONOMER"/>
<dbReference type="UniPathway" id="UPA00263">
    <property type="reaction ID" value="UER00380"/>
</dbReference>
<dbReference type="PRO" id="PR:P39306"/>
<dbReference type="Proteomes" id="UP000000625">
    <property type="component" value="Chromosome"/>
</dbReference>
<dbReference type="GO" id="GO:0005829">
    <property type="term" value="C:cytosol"/>
    <property type="evidence" value="ECO:0000318"/>
    <property type="project" value="GO_Central"/>
</dbReference>
<dbReference type="GO" id="GO:0016832">
    <property type="term" value="F:aldehyde-lyase activity"/>
    <property type="evidence" value="ECO:0000318"/>
    <property type="project" value="GO_Central"/>
</dbReference>
<dbReference type="GO" id="GO:0008742">
    <property type="term" value="F:L-ribulose-phosphate 4-epimerase activity"/>
    <property type="evidence" value="ECO:0000314"/>
    <property type="project" value="EcoCyc"/>
</dbReference>
<dbReference type="GO" id="GO:0008270">
    <property type="term" value="F:zinc ion binding"/>
    <property type="evidence" value="ECO:0000250"/>
    <property type="project" value="UniProtKB"/>
</dbReference>
<dbReference type="GO" id="GO:0019854">
    <property type="term" value="P:L-ascorbic acid catabolic process"/>
    <property type="evidence" value="ECO:0007669"/>
    <property type="project" value="UniProtKB-UniRule"/>
</dbReference>
<dbReference type="GO" id="GO:0019852">
    <property type="term" value="P:L-ascorbic acid metabolic process"/>
    <property type="evidence" value="ECO:0000270"/>
    <property type="project" value="EcoCyc"/>
</dbReference>
<dbReference type="GO" id="GO:0019323">
    <property type="term" value="P:pentose catabolic process"/>
    <property type="evidence" value="ECO:0000318"/>
    <property type="project" value="GO_Central"/>
</dbReference>
<dbReference type="CDD" id="cd00398">
    <property type="entry name" value="Aldolase_II"/>
    <property type="match status" value="1"/>
</dbReference>
<dbReference type="FunFam" id="3.40.225.10:FF:000001">
    <property type="entry name" value="L-ribulose-5-phosphate 4-epimerase UlaF"/>
    <property type="match status" value="1"/>
</dbReference>
<dbReference type="Gene3D" id="3.40.225.10">
    <property type="entry name" value="Class II aldolase/adducin N-terminal domain"/>
    <property type="match status" value="1"/>
</dbReference>
<dbReference type="HAMAP" id="MF_01952">
    <property type="entry name" value="UlaF"/>
    <property type="match status" value="1"/>
</dbReference>
<dbReference type="InterPro" id="IPR050197">
    <property type="entry name" value="Aldolase_class_II_sugar_metab"/>
</dbReference>
<dbReference type="InterPro" id="IPR001303">
    <property type="entry name" value="Aldolase_II/adducin_N"/>
</dbReference>
<dbReference type="InterPro" id="IPR036409">
    <property type="entry name" value="Aldolase_II/adducin_N_sf"/>
</dbReference>
<dbReference type="InterPro" id="IPR023499">
    <property type="entry name" value="UlaF"/>
</dbReference>
<dbReference type="NCBIfam" id="NF006047">
    <property type="entry name" value="PRK08193.1"/>
    <property type="match status" value="1"/>
</dbReference>
<dbReference type="NCBIfam" id="NF009003">
    <property type="entry name" value="PRK12348.1"/>
    <property type="match status" value="1"/>
</dbReference>
<dbReference type="PANTHER" id="PTHR22789">
    <property type="entry name" value="FUCULOSE PHOSPHATE ALDOLASE"/>
    <property type="match status" value="1"/>
</dbReference>
<dbReference type="PANTHER" id="PTHR22789:SF9">
    <property type="entry name" value="L-RIBULOSE-5-PHOSPHATE 4-EPIMERASE ULAF"/>
    <property type="match status" value="1"/>
</dbReference>
<dbReference type="Pfam" id="PF00596">
    <property type="entry name" value="Aldolase_II"/>
    <property type="match status" value="1"/>
</dbReference>
<dbReference type="SMART" id="SM01007">
    <property type="entry name" value="Aldolase_II"/>
    <property type="match status" value="1"/>
</dbReference>
<dbReference type="SUPFAM" id="SSF53639">
    <property type="entry name" value="AraD/HMP-PK domain-like"/>
    <property type="match status" value="1"/>
</dbReference>
<proteinExistence type="evidence at protein level"/>
<accession>P39306</accession>
<accession>Q2M6A7</accession>
<keyword id="KW-0119">Carbohydrate metabolism</keyword>
<keyword id="KW-0413">Isomerase</keyword>
<keyword id="KW-0479">Metal-binding</keyword>
<keyword id="KW-1185">Reference proteome</keyword>
<keyword id="KW-0862">Zinc</keyword>